<sequence length="314" mass="35526">MGWALKKVCFLGVIFLISACTVKKNGVKNLSYKHESLRAYENAKDYDPTTKKATYKRNFFERHFKHHTDSQGNNTKQPLDNGMRDSNAIQRATMHPYQVGGKWYYPTKVDLGEKFDGIASWYGPNFHAKKTSNGEIYNMYAHTAAHKTLPMNTVVKVINVDNNSSTIVRINDRGPFVSNRIIDLSNAAARDIDMVQKGTASVRLIVLGFGGVISKQYEQSFNANYSKILHKEFKVGESEKSVSGGKFSLQMGAFRNQIGAQTLADKLQAENKNYSVKVAFKDDLYKVLVQGFQSEEEARDFMKKYNQNAVLTRE</sequence>
<reference key="1">
    <citation type="journal article" date="1999" name="Nature">
        <title>Genomic sequence comparison of two unrelated isolates of the human gastric pathogen Helicobacter pylori.</title>
        <authorList>
            <person name="Alm R.A."/>
            <person name="Ling L.-S.L."/>
            <person name="Moir D.T."/>
            <person name="King B.L."/>
            <person name="Brown E.D."/>
            <person name="Doig P.C."/>
            <person name="Smith D.R."/>
            <person name="Noonan B."/>
            <person name="Guild B.C."/>
            <person name="deJonge B.L."/>
            <person name="Carmel G."/>
            <person name="Tummino P.J."/>
            <person name="Caruso A."/>
            <person name="Uria-Nickelsen M."/>
            <person name="Mills D.M."/>
            <person name="Ives C."/>
            <person name="Gibson R."/>
            <person name="Merberg D."/>
            <person name="Mills S.D."/>
            <person name="Jiang Q."/>
            <person name="Taylor D.E."/>
            <person name="Vovis G.F."/>
            <person name="Trust T.J."/>
        </authorList>
    </citation>
    <scope>NUCLEOTIDE SEQUENCE [LARGE SCALE GENOMIC DNA]</scope>
    <source>
        <strain>J99 / ATCC 700824</strain>
    </source>
</reference>
<comment type="function">
    <text evidence="1">Lytic transglycosylase with a strong preference for naked glycan strands that lack stem peptides.</text>
</comment>
<comment type="subcellular location">
    <subcellularLocation>
        <location evidence="1">Cell membrane</location>
        <topology evidence="1">Lipid-anchor</topology>
    </subcellularLocation>
</comment>
<comment type="similarity">
    <text evidence="1">Belongs to the RlpA family.</text>
</comment>
<gene>
    <name evidence="1" type="primary">rlpA</name>
    <name type="ordered locus">jhp_1479</name>
</gene>
<evidence type="ECO:0000255" key="1">
    <source>
        <dbReference type="HAMAP-Rule" id="MF_02071"/>
    </source>
</evidence>
<proteinExistence type="inferred from homology"/>
<keyword id="KW-1003">Cell membrane</keyword>
<keyword id="KW-0961">Cell wall biogenesis/degradation</keyword>
<keyword id="KW-0449">Lipoprotein</keyword>
<keyword id="KW-0456">Lyase</keyword>
<keyword id="KW-0472">Membrane</keyword>
<keyword id="KW-0564">Palmitate</keyword>
<keyword id="KW-0732">Signal</keyword>
<feature type="signal peptide" evidence="1">
    <location>
        <begin position="1"/>
        <end position="19"/>
    </location>
</feature>
<feature type="chain" id="PRO_0000030805" description="Endolytic peptidoglycan transglycosylase RlpA" evidence="1">
    <location>
        <begin position="20"/>
        <end position="314"/>
    </location>
</feature>
<feature type="domain" description="SPOR" evidence="1">
    <location>
        <begin position="241"/>
        <end position="314"/>
    </location>
</feature>
<feature type="lipid moiety-binding region" description="N-palmitoyl cysteine" evidence="1">
    <location>
        <position position="20"/>
    </location>
</feature>
<feature type="lipid moiety-binding region" description="S-diacylglycerol cysteine" evidence="1">
    <location>
        <position position="20"/>
    </location>
</feature>
<dbReference type="EC" id="4.2.2.-" evidence="1"/>
<dbReference type="EMBL" id="AE001439">
    <property type="protein sequence ID" value="AAD07051.1"/>
    <property type="molecule type" value="Genomic_DNA"/>
</dbReference>
<dbReference type="PIR" id="H71802">
    <property type="entry name" value="H71802"/>
</dbReference>
<dbReference type="RefSeq" id="WP_000539594.1">
    <property type="nucleotide sequence ID" value="NC_000921.1"/>
</dbReference>
<dbReference type="SMR" id="Q9ZJ38"/>
<dbReference type="KEGG" id="hpj:jhp_1479"/>
<dbReference type="PATRIC" id="fig|85963.30.peg.1062"/>
<dbReference type="eggNOG" id="COG0797">
    <property type="taxonomic scope" value="Bacteria"/>
</dbReference>
<dbReference type="Proteomes" id="UP000000804">
    <property type="component" value="Chromosome"/>
</dbReference>
<dbReference type="GO" id="GO:0005886">
    <property type="term" value="C:plasma membrane"/>
    <property type="evidence" value="ECO:0007669"/>
    <property type="project" value="UniProtKB-SubCell"/>
</dbReference>
<dbReference type="GO" id="GO:0008932">
    <property type="term" value="F:lytic endotransglycosylase activity"/>
    <property type="evidence" value="ECO:0007669"/>
    <property type="project" value="UniProtKB-UniRule"/>
</dbReference>
<dbReference type="GO" id="GO:0042834">
    <property type="term" value="F:peptidoglycan binding"/>
    <property type="evidence" value="ECO:0007669"/>
    <property type="project" value="InterPro"/>
</dbReference>
<dbReference type="GO" id="GO:0071555">
    <property type="term" value="P:cell wall organization"/>
    <property type="evidence" value="ECO:0007669"/>
    <property type="project" value="UniProtKB-KW"/>
</dbReference>
<dbReference type="GO" id="GO:0000270">
    <property type="term" value="P:peptidoglycan metabolic process"/>
    <property type="evidence" value="ECO:0007669"/>
    <property type="project" value="UniProtKB-UniRule"/>
</dbReference>
<dbReference type="CDD" id="cd22268">
    <property type="entry name" value="DPBB_RlpA-like"/>
    <property type="match status" value="1"/>
</dbReference>
<dbReference type="Gene3D" id="2.40.40.10">
    <property type="entry name" value="RlpA-like domain"/>
    <property type="match status" value="1"/>
</dbReference>
<dbReference type="Gene3D" id="3.30.70.1070">
    <property type="entry name" value="Sporulation related repeat"/>
    <property type="match status" value="1"/>
</dbReference>
<dbReference type="HAMAP" id="MF_02071">
    <property type="entry name" value="RlpA"/>
    <property type="match status" value="1"/>
</dbReference>
<dbReference type="InterPro" id="IPR034718">
    <property type="entry name" value="RlpA"/>
</dbReference>
<dbReference type="InterPro" id="IPR009009">
    <property type="entry name" value="RlpA-like_DPBB"/>
</dbReference>
<dbReference type="InterPro" id="IPR036908">
    <property type="entry name" value="RlpA-like_sf"/>
</dbReference>
<dbReference type="InterPro" id="IPR012997">
    <property type="entry name" value="RplA"/>
</dbReference>
<dbReference type="InterPro" id="IPR007730">
    <property type="entry name" value="SPOR-like_dom"/>
</dbReference>
<dbReference type="InterPro" id="IPR036680">
    <property type="entry name" value="SPOR-like_sf"/>
</dbReference>
<dbReference type="NCBIfam" id="TIGR00413">
    <property type="entry name" value="rlpA"/>
    <property type="match status" value="1"/>
</dbReference>
<dbReference type="PANTHER" id="PTHR34183">
    <property type="entry name" value="ENDOLYTIC PEPTIDOGLYCAN TRANSGLYCOSYLASE RLPA"/>
    <property type="match status" value="1"/>
</dbReference>
<dbReference type="PANTHER" id="PTHR34183:SF1">
    <property type="entry name" value="ENDOLYTIC PEPTIDOGLYCAN TRANSGLYCOSYLASE RLPA"/>
    <property type="match status" value="1"/>
</dbReference>
<dbReference type="Pfam" id="PF03330">
    <property type="entry name" value="DPBB_1"/>
    <property type="match status" value="1"/>
</dbReference>
<dbReference type="Pfam" id="PF05036">
    <property type="entry name" value="SPOR"/>
    <property type="match status" value="1"/>
</dbReference>
<dbReference type="SUPFAM" id="SSF50685">
    <property type="entry name" value="Barwin-like endoglucanases"/>
    <property type="match status" value="1"/>
</dbReference>
<dbReference type="SUPFAM" id="SSF110997">
    <property type="entry name" value="Sporulation related repeat"/>
    <property type="match status" value="1"/>
</dbReference>
<dbReference type="PROSITE" id="PS51257">
    <property type="entry name" value="PROKAR_LIPOPROTEIN"/>
    <property type="match status" value="1"/>
</dbReference>
<dbReference type="PROSITE" id="PS51724">
    <property type="entry name" value="SPOR"/>
    <property type="match status" value="1"/>
</dbReference>
<organism>
    <name type="scientific">Helicobacter pylori (strain J99 / ATCC 700824)</name>
    <name type="common">Campylobacter pylori J99</name>
    <dbReference type="NCBI Taxonomy" id="85963"/>
    <lineage>
        <taxon>Bacteria</taxon>
        <taxon>Pseudomonadati</taxon>
        <taxon>Campylobacterota</taxon>
        <taxon>Epsilonproteobacteria</taxon>
        <taxon>Campylobacterales</taxon>
        <taxon>Helicobacteraceae</taxon>
        <taxon>Helicobacter</taxon>
    </lineage>
</organism>
<name>RLPA_HELPJ</name>
<accession>Q9ZJ38</accession>
<protein>
    <recommendedName>
        <fullName evidence="1">Endolytic peptidoglycan transglycosylase RlpA</fullName>
        <ecNumber evidence="1">4.2.2.-</ecNumber>
    </recommendedName>
</protein>